<reference key="1">
    <citation type="journal article" date="1998" name="DNA Res.">
        <title>The primary structure and genomic organization of five novel transcripts located close to the Huntington's disease gene on human chromosome 4p16.3.</title>
        <authorList>
            <person name="Hadano S."/>
            <person name="Ishida Y."/>
            <person name="Ikeda J.-E."/>
        </authorList>
    </citation>
    <scope>NUCLEOTIDE SEQUENCE [MRNA] (ISOFORM 1)</scope>
    <source>
        <tissue>Brain</tissue>
    </source>
</reference>
<reference key="2">
    <citation type="journal article" date="1998" name="Genomics">
        <title>Identification and characterization of a novel RING-finger gene (RNF4) mapping at 4p16.3.</title>
        <authorList>
            <person name="Chiariotti L."/>
            <person name="Benvenuto G."/>
            <person name="Fedele M."/>
            <person name="Santoro M."/>
            <person name="Simeone A."/>
            <person name="Fusco A."/>
            <person name="Bruni C.B."/>
        </authorList>
    </citation>
    <scope>NUCLEOTIDE SEQUENCE [MRNA] (ISOFORM 1)</scope>
    <scope>TISSUE SPECIFICITY</scope>
    <source>
        <tissue>Brain</tissue>
    </source>
</reference>
<reference key="3">
    <citation type="journal article" date="2004" name="Nat. Genet.">
        <title>Complete sequencing and characterization of 21,243 full-length human cDNAs.</title>
        <authorList>
            <person name="Ota T."/>
            <person name="Suzuki Y."/>
            <person name="Nishikawa T."/>
            <person name="Otsuki T."/>
            <person name="Sugiyama T."/>
            <person name="Irie R."/>
            <person name="Wakamatsu A."/>
            <person name="Hayashi K."/>
            <person name="Sato H."/>
            <person name="Nagai K."/>
            <person name="Kimura K."/>
            <person name="Makita H."/>
            <person name="Sekine M."/>
            <person name="Obayashi M."/>
            <person name="Nishi T."/>
            <person name="Shibahara T."/>
            <person name="Tanaka T."/>
            <person name="Ishii S."/>
            <person name="Yamamoto J."/>
            <person name="Saito K."/>
            <person name="Kawai Y."/>
            <person name="Isono Y."/>
            <person name="Nakamura Y."/>
            <person name="Nagahari K."/>
            <person name="Murakami K."/>
            <person name="Yasuda T."/>
            <person name="Iwayanagi T."/>
            <person name="Wagatsuma M."/>
            <person name="Shiratori A."/>
            <person name="Sudo H."/>
            <person name="Hosoiri T."/>
            <person name="Kaku Y."/>
            <person name="Kodaira H."/>
            <person name="Kondo H."/>
            <person name="Sugawara M."/>
            <person name="Takahashi M."/>
            <person name="Kanda K."/>
            <person name="Yokoi T."/>
            <person name="Furuya T."/>
            <person name="Kikkawa E."/>
            <person name="Omura Y."/>
            <person name="Abe K."/>
            <person name="Kamihara K."/>
            <person name="Katsuta N."/>
            <person name="Sato K."/>
            <person name="Tanikawa M."/>
            <person name="Yamazaki M."/>
            <person name="Ninomiya K."/>
            <person name="Ishibashi T."/>
            <person name="Yamashita H."/>
            <person name="Murakawa K."/>
            <person name="Fujimori K."/>
            <person name="Tanai H."/>
            <person name="Kimata M."/>
            <person name="Watanabe M."/>
            <person name="Hiraoka S."/>
            <person name="Chiba Y."/>
            <person name="Ishida S."/>
            <person name="Ono Y."/>
            <person name="Takiguchi S."/>
            <person name="Watanabe S."/>
            <person name="Yosida M."/>
            <person name="Hotuta T."/>
            <person name="Kusano J."/>
            <person name="Kanehori K."/>
            <person name="Takahashi-Fujii A."/>
            <person name="Hara H."/>
            <person name="Tanase T.-O."/>
            <person name="Nomura Y."/>
            <person name="Togiya S."/>
            <person name="Komai F."/>
            <person name="Hara R."/>
            <person name="Takeuchi K."/>
            <person name="Arita M."/>
            <person name="Imose N."/>
            <person name="Musashino K."/>
            <person name="Yuuki H."/>
            <person name="Oshima A."/>
            <person name="Sasaki N."/>
            <person name="Aotsuka S."/>
            <person name="Yoshikawa Y."/>
            <person name="Matsunawa H."/>
            <person name="Ichihara T."/>
            <person name="Shiohata N."/>
            <person name="Sano S."/>
            <person name="Moriya S."/>
            <person name="Momiyama H."/>
            <person name="Satoh N."/>
            <person name="Takami S."/>
            <person name="Terashima Y."/>
            <person name="Suzuki O."/>
            <person name="Nakagawa S."/>
            <person name="Senoh A."/>
            <person name="Mizoguchi H."/>
            <person name="Goto Y."/>
            <person name="Shimizu F."/>
            <person name="Wakebe H."/>
            <person name="Hishigaki H."/>
            <person name="Watanabe T."/>
            <person name="Sugiyama A."/>
            <person name="Takemoto M."/>
            <person name="Kawakami B."/>
            <person name="Yamazaki M."/>
            <person name="Watanabe K."/>
            <person name="Kumagai A."/>
            <person name="Itakura S."/>
            <person name="Fukuzumi Y."/>
            <person name="Fujimori Y."/>
            <person name="Komiyama M."/>
            <person name="Tashiro H."/>
            <person name="Tanigami A."/>
            <person name="Fujiwara T."/>
            <person name="Ono T."/>
            <person name="Yamada K."/>
            <person name="Fujii Y."/>
            <person name="Ozaki K."/>
            <person name="Hirao M."/>
            <person name="Ohmori Y."/>
            <person name="Kawabata A."/>
            <person name="Hikiji T."/>
            <person name="Kobatake N."/>
            <person name="Inagaki H."/>
            <person name="Ikema Y."/>
            <person name="Okamoto S."/>
            <person name="Okitani R."/>
            <person name="Kawakami T."/>
            <person name="Noguchi S."/>
            <person name="Itoh T."/>
            <person name="Shigeta K."/>
            <person name="Senba T."/>
            <person name="Matsumura K."/>
            <person name="Nakajima Y."/>
            <person name="Mizuno T."/>
            <person name="Morinaga M."/>
            <person name="Sasaki M."/>
            <person name="Togashi T."/>
            <person name="Oyama M."/>
            <person name="Hata H."/>
            <person name="Watanabe M."/>
            <person name="Komatsu T."/>
            <person name="Mizushima-Sugano J."/>
            <person name="Satoh T."/>
            <person name="Shirai Y."/>
            <person name="Takahashi Y."/>
            <person name="Nakagawa K."/>
            <person name="Okumura K."/>
            <person name="Nagase T."/>
            <person name="Nomura N."/>
            <person name="Kikuchi H."/>
            <person name="Masuho Y."/>
            <person name="Yamashita R."/>
            <person name="Nakai K."/>
            <person name="Yada T."/>
            <person name="Nakamura Y."/>
            <person name="Ohara O."/>
            <person name="Isogai T."/>
            <person name="Sugano S."/>
        </authorList>
    </citation>
    <scope>NUCLEOTIDE SEQUENCE [LARGE SCALE MRNA] (ISOFORMS 1 AND 2)</scope>
    <source>
        <tissue>Hair follicle dermal papilla</tissue>
        <tissue>Testis</tissue>
        <tissue>Tongue</tissue>
    </source>
</reference>
<reference key="4">
    <citation type="journal article" date="2005" name="Nature">
        <title>Generation and annotation of the DNA sequences of human chromosomes 2 and 4.</title>
        <authorList>
            <person name="Hillier L.W."/>
            <person name="Graves T.A."/>
            <person name="Fulton R.S."/>
            <person name="Fulton L.A."/>
            <person name="Pepin K.H."/>
            <person name="Minx P."/>
            <person name="Wagner-McPherson C."/>
            <person name="Layman D."/>
            <person name="Wylie K."/>
            <person name="Sekhon M."/>
            <person name="Becker M.C."/>
            <person name="Fewell G.A."/>
            <person name="Delehaunty K.D."/>
            <person name="Miner T.L."/>
            <person name="Nash W.E."/>
            <person name="Kremitzki C."/>
            <person name="Oddy L."/>
            <person name="Du H."/>
            <person name="Sun H."/>
            <person name="Bradshaw-Cordum H."/>
            <person name="Ali J."/>
            <person name="Carter J."/>
            <person name="Cordes M."/>
            <person name="Harris A."/>
            <person name="Isak A."/>
            <person name="van Brunt A."/>
            <person name="Nguyen C."/>
            <person name="Du F."/>
            <person name="Courtney L."/>
            <person name="Kalicki J."/>
            <person name="Ozersky P."/>
            <person name="Abbott S."/>
            <person name="Armstrong J."/>
            <person name="Belter E.A."/>
            <person name="Caruso L."/>
            <person name="Cedroni M."/>
            <person name="Cotton M."/>
            <person name="Davidson T."/>
            <person name="Desai A."/>
            <person name="Elliott G."/>
            <person name="Erb T."/>
            <person name="Fronick C."/>
            <person name="Gaige T."/>
            <person name="Haakenson W."/>
            <person name="Haglund K."/>
            <person name="Holmes A."/>
            <person name="Harkins R."/>
            <person name="Kim K."/>
            <person name="Kruchowski S.S."/>
            <person name="Strong C.M."/>
            <person name="Grewal N."/>
            <person name="Goyea E."/>
            <person name="Hou S."/>
            <person name="Levy A."/>
            <person name="Martinka S."/>
            <person name="Mead K."/>
            <person name="McLellan M.D."/>
            <person name="Meyer R."/>
            <person name="Randall-Maher J."/>
            <person name="Tomlinson C."/>
            <person name="Dauphin-Kohlberg S."/>
            <person name="Kozlowicz-Reilly A."/>
            <person name="Shah N."/>
            <person name="Swearengen-Shahid S."/>
            <person name="Snider J."/>
            <person name="Strong J.T."/>
            <person name="Thompson J."/>
            <person name="Yoakum M."/>
            <person name="Leonard S."/>
            <person name="Pearman C."/>
            <person name="Trani L."/>
            <person name="Radionenko M."/>
            <person name="Waligorski J.E."/>
            <person name="Wang C."/>
            <person name="Rock S.M."/>
            <person name="Tin-Wollam A.-M."/>
            <person name="Maupin R."/>
            <person name="Latreille P."/>
            <person name="Wendl M.C."/>
            <person name="Yang S.-P."/>
            <person name="Pohl C."/>
            <person name="Wallis J.W."/>
            <person name="Spieth J."/>
            <person name="Bieri T.A."/>
            <person name="Berkowicz N."/>
            <person name="Nelson J.O."/>
            <person name="Osborne J."/>
            <person name="Ding L."/>
            <person name="Meyer R."/>
            <person name="Sabo A."/>
            <person name="Shotland Y."/>
            <person name="Sinha P."/>
            <person name="Wohldmann P.E."/>
            <person name="Cook L.L."/>
            <person name="Hickenbotham M.T."/>
            <person name="Eldred J."/>
            <person name="Williams D."/>
            <person name="Jones T.A."/>
            <person name="She X."/>
            <person name="Ciccarelli F.D."/>
            <person name="Izaurralde E."/>
            <person name="Taylor J."/>
            <person name="Schmutz J."/>
            <person name="Myers R.M."/>
            <person name="Cox D.R."/>
            <person name="Huang X."/>
            <person name="McPherson J.D."/>
            <person name="Mardis E.R."/>
            <person name="Clifton S.W."/>
            <person name="Warren W.C."/>
            <person name="Chinwalla A.T."/>
            <person name="Eddy S.R."/>
            <person name="Marra M.A."/>
            <person name="Ovcharenko I."/>
            <person name="Furey T.S."/>
            <person name="Miller W."/>
            <person name="Eichler E.E."/>
            <person name="Bork P."/>
            <person name="Suyama M."/>
            <person name="Torrents D."/>
            <person name="Waterston R.H."/>
            <person name="Wilson R.K."/>
        </authorList>
    </citation>
    <scope>NUCLEOTIDE SEQUENCE [LARGE SCALE GENOMIC DNA]</scope>
</reference>
<reference key="5">
    <citation type="journal article" date="2004" name="Genome Res.">
        <title>The status, quality, and expansion of the NIH full-length cDNA project: the Mammalian Gene Collection (MGC).</title>
        <authorList>
            <consortium name="The MGC Project Team"/>
        </authorList>
    </citation>
    <scope>NUCLEOTIDE SEQUENCE [LARGE SCALE MRNA] (ISOFORM 1)</scope>
    <source>
        <tissue>Testis</tissue>
    </source>
</reference>
<reference key="6">
    <citation type="journal article" date="2000" name="J. Biol. Chem.">
        <title>A novel member of the BTB/POZ family, PATZ, associates with the RNF4 RING finger protein and acts as a transcriptional repressor.</title>
        <authorList>
            <person name="Fedele M."/>
            <person name="Benvenuto G."/>
            <person name="Pero R."/>
            <person name="Majello B."/>
            <person name="Battista S."/>
            <person name="Lembo F."/>
            <person name="Vollono E."/>
            <person name="Day P.M."/>
            <person name="Santoro M."/>
            <person name="Lania L."/>
            <person name="Bruni C.B."/>
            <person name="Fusco A."/>
            <person name="Chiatiotti L."/>
        </authorList>
    </citation>
    <scope>INTERACTION WITH PATZ1</scope>
</reference>
<reference key="7">
    <citation type="journal article" date="2003" name="J. Biol. Chem.">
        <title>The RING finger protein RNF4, a co-regulator of transcription, interacts with the TRPS1 transcription factor.</title>
        <authorList>
            <person name="Kaiser F.J."/>
            <person name="Moeroey T."/>
            <person name="Chang G.T."/>
            <person name="Horsthemke B."/>
            <person name="Luedecke H.J."/>
        </authorList>
    </citation>
    <scope>FUNCTION</scope>
    <scope>INTERACTION WITH TRPS1</scope>
    <scope>SUBCELLULAR LOCATION</scope>
</reference>
<reference key="8">
    <citation type="journal article" date="2005" name="Exp. Cell Res.">
        <title>SUMO-1 promotes association of SNURF (RNF4) with PML nuclear bodies.</title>
        <authorList>
            <person name="Haekli M."/>
            <person name="Karvonen U."/>
            <person name="Jaenne O.A."/>
            <person name="Palvimo J.J."/>
        </authorList>
    </citation>
    <scope>INTERACTION WITH PML</scope>
    <scope>SUBCELLULAR LOCATION</scope>
</reference>
<reference key="9">
    <citation type="journal article" date="2008" name="Nat. Cell Biol.">
        <title>RNF4 is a poly-SUMO-specific E3 ubiquitin ligase required for arsenic-induced PML degradation.</title>
        <authorList>
            <person name="Tatham M.H."/>
            <person name="Geoffroy M.C."/>
            <person name="Shen L."/>
            <person name="Plechanovova A."/>
            <person name="Hattersley N."/>
            <person name="Jaffray E.G."/>
            <person name="Palvimo J.J."/>
            <person name="Hay R.T."/>
        </authorList>
    </citation>
    <scope>FUNCTION</scope>
    <scope>DOMAIN</scope>
</reference>
<reference key="10">
    <citation type="journal article" date="2008" name="Proc. Natl. Acad. Sci. U.S.A.">
        <title>A quantitative atlas of mitotic phosphorylation.</title>
        <authorList>
            <person name="Dephoure N."/>
            <person name="Zhou C."/>
            <person name="Villen J."/>
            <person name="Beausoleil S.A."/>
            <person name="Bakalarski C.E."/>
            <person name="Elledge S.J."/>
            <person name="Gygi S.P."/>
        </authorList>
    </citation>
    <scope>PHOSPHORYLATION [LARGE SCALE ANALYSIS] AT SER-94 AND SER-95</scope>
    <scope>IDENTIFICATION BY MASS SPECTROMETRY [LARGE SCALE ANALYSIS]</scope>
    <source>
        <tissue>Cervix carcinoma</tissue>
    </source>
</reference>
<reference key="11">
    <citation type="journal article" date="2009" name="EMBO J.">
        <title>PARP-1 transcriptional activity is regulated by sumoylation upon heat shock.</title>
        <authorList>
            <person name="Martin N."/>
            <person name="Schwamborn K."/>
            <person name="Schreiber V."/>
            <person name="Werner A."/>
            <person name="Guillier C."/>
            <person name="Zhang X.D."/>
            <person name="Bischof O."/>
            <person name="Seeler J.S."/>
            <person name="Dejean A."/>
        </authorList>
    </citation>
    <scope>FUNCTION</scope>
</reference>
<reference key="12">
    <citation type="journal article" date="2009" name="Mol. Cell. Biol.">
        <title>Extracellular signal-regulated kinase mitogen-activated protein kinase signaling initiates a dynamic interplay between sumoylation and ubiquitination to regulate the activity of the transcriptional activator PEA3.</title>
        <authorList>
            <person name="Guo B."/>
            <person name="Sharrocks A.D."/>
        </authorList>
    </citation>
    <scope>FUNCTION</scope>
</reference>
<reference key="13">
    <citation type="journal article" date="2009" name="Sci. Signal.">
        <title>Quantitative phosphoproteomic analysis of T cell receptor signaling reveals system-wide modulation of protein-protein interactions.</title>
        <authorList>
            <person name="Mayya V."/>
            <person name="Lundgren D.H."/>
            <person name="Hwang S.-I."/>
            <person name="Rezaul K."/>
            <person name="Wu L."/>
            <person name="Eng J.K."/>
            <person name="Rodionov V."/>
            <person name="Han D.K."/>
        </authorList>
    </citation>
    <scope>PHOSPHORYLATION [LARGE SCALE ANALYSIS] AT SER-94 AND SER-95</scope>
    <scope>IDENTIFICATION BY MASS SPECTROMETRY [LARGE SCALE ANALYSIS]</scope>
    <source>
        <tissue>Leukemic T-cell</tissue>
    </source>
</reference>
<reference key="14">
    <citation type="journal article" date="2010" name="J. Cell Biol.">
        <title>The SUMO protease SENP6 is essential for inner kinetochore assembly.</title>
        <authorList>
            <person name="Mukhopadhyay D."/>
            <person name="Arnaoutov A."/>
            <person name="Dasso M."/>
        </authorList>
    </citation>
    <scope>FUNCTION</scope>
</reference>
<reference key="15">
    <citation type="journal article" date="2010" name="Mol. Biol. Cell">
        <title>Arsenic-induced SUMO-dependent recruitment of RNF4 into PML nuclear bodies.</title>
        <authorList>
            <person name="Geoffroy M.C."/>
            <person name="Jaffray E.G."/>
            <person name="Walker K.J."/>
            <person name="Hay R.T."/>
        </authorList>
    </citation>
    <scope>FUNCTION</scope>
    <scope>INTERACTION WITH SUMOYLATED PML</scope>
    <scope>SUBCELLULAR LOCATION</scope>
</reference>
<reference key="16">
    <citation type="journal article" date="2010" name="Nucleic Acids Res.">
        <title>RNF4 and VHL regulate the proteasomal degradation of SUMO-conjugated Hypoxia-Inducible Factor-2alpha.</title>
        <authorList>
            <person name="van Hagen M."/>
            <person name="Overmeer R.M."/>
            <person name="Abolvardi S.S."/>
            <person name="Vertegaal A.C."/>
        </authorList>
    </citation>
    <scope>FUNCTION</scope>
</reference>
<reference key="17">
    <citation type="journal article" date="2012" name="PLoS ONE">
        <title>Requirement of PML SUMO interacting motif for RNF4- or arsenic trioxide-induced degradation of nuclear PML isoforms.</title>
        <authorList>
            <person name="Maroui M.A."/>
            <person name="Kheddache-Atmane S."/>
            <person name="El Asmi F."/>
            <person name="Dianoux L."/>
            <person name="Aubry M."/>
            <person name="Chelbi-Alix M.K."/>
        </authorList>
    </citation>
    <scope>INTERACTION WITH PML</scope>
</reference>
<reference key="18">
    <citation type="journal article" date="2017" name="Nat. Commun.">
        <title>HSP70-Hrd1 axis precludes the oncorepressor potential of N-terminal misfolded Blimp-1s in lymphoma cells.</title>
        <authorList>
            <person name="Wang W.F."/>
            <person name="Yan L."/>
            <person name="Liu Z."/>
            <person name="Liu L.X."/>
            <person name="Lin J."/>
            <person name="Liu Z.Y."/>
            <person name="Chen X.P."/>
            <person name="Zhang W."/>
            <person name="Xu Z.Z."/>
            <person name="Shi T."/>
            <person name="Li J.M."/>
            <person name="Zhao Y.L."/>
            <person name="Meng G."/>
            <person name="Xia Y."/>
            <person name="Li J.Y."/>
            <person name="Zhu J."/>
        </authorList>
    </citation>
    <scope>INTERACTION WITH PRDM1</scope>
</reference>
<reference key="19">
    <citation type="journal article" date="2022" name="Nat. Cell Biol.">
        <title>The ubiquitin-dependent ATPase p97 removes cytotoxic trapped PARP1 from chromatin.</title>
        <authorList>
            <person name="Krastev D.B."/>
            <person name="Li S."/>
            <person name="Sun Y."/>
            <person name="Wicks A.J."/>
            <person name="Hoslett G."/>
            <person name="Weekes D."/>
            <person name="Badder L.M."/>
            <person name="Knight E.G."/>
            <person name="Marlow R."/>
            <person name="Pardo M.C."/>
            <person name="Yu L."/>
            <person name="Talele T.T."/>
            <person name="Bartek J."/>
            <person name="Choudhary J.S."/>
            <person name="Pommier Y."/>
            <person name="Pettitt S.J."/>
            <person name="Tutt A.N.J."/>
            <person name="Ramadan K."/>
            <person name="Lord C.J."/>
        </authorList>
    </citation>
    <scope>FUNCTION</scope>
    <scope>CATALYTIC ACTIVITY</scope>
    <scope>PATHWAY</scope>
    <scope>MUTAGENESIS OF MET-136; HIS-156 AND ARG-177</scope>
</reference>
<reference key="20">
    <citation type="submission" date="2007-07" db="PDB data bank">
        <title>Solution structure of the RING domain of the human RING finger protein 4.</title>
        <authorList>
            <consortium name="RIKEN structural genomics initiative (RSGI)"/>
        </authorList>
    </citation>
    <scope>STRUCTURE BY NMR OF 122-183</scope>
</reference>
<gene>
    <name evidence="20 22" type="primary">RNF4</name>
    <name evidence="19" type="synonym">SNURF</name>
    <name type="ORF">RES4-26</name>
</gene>
<feature type="chain" id="PRO_0000056043" description="E3 ubiquitin-protein ligase RNF4">
    <location>
        <begin position="1"/>
        <end position="190"/>
    </location>
</feature>
<feature type="zinc finger region" description="RING-type" evidence="3">
    <location>
        <begin position="132"/>
        <end position="177"/>
    </location>
</feature>
<feature type="region of interest" description="Disordered" evidence="4">
    <location>
        <begin position="1"/>
        <end position="29"/>
    </location>
</feature>
<feature type="region of interest" description="Required for ubiquitination activity" evidence="2">
    <location>
        <begin position="1"/>
        <end position="16"/>
    </location>
</feature>
<feature type="region of interest" description="Mediates interaction with TRPS1" evidence="2">
    <location>
        <begin position="4"/>
        <end position="61"/>
    </location>
</feature>
<feature type="short sequence motif" description="SUMO interaction motif 1" evidence="8">
    <location>
        <begin position="36"/>
        <end position="39"/>
    </location>
</feature>
<feature type="short sequence motif" description="SUMO interaction motif 2" evidence="8">
    <location>
        <begin position="46"/>
        <end position="49"/>
    </location>
</feature>
<feature type="short sequence motif" description="SUMO interaction motif 3" evidence="8">
    <location>
        <begin position="57"/>
        <end position="59"/>
    </location>
</feature>
<feature type="short sequence motif" description="SUMO interaction motif 4" evidence="8">
    <location>
        <begin position="67"/>
        <end position="70"/>
    </location>
</feature>
<feature type="binding site" evidence="1">
    <location>
        <position position="132"/>
    </location>
    <ligand>
        <name>Zn(2+)</name>
        <dbReference type="ChEBI" id="CHEBI:29105"/>
        <label>1</label>
    </ligand>
</feature>
<feature type="binding site" evidence="1">
    <location>
        <position position="135"/>
    </location>
    <ligand>
        <name>Zn(2+)</name>
        <dbReference type="ChEBI" id="CHEBI:29105"/>
        <label>1</label>
    </ligand>
</feature>
<feature type="binding site" evidence="1">
    <location>
        <position position="154"/>
    </location>
    <ligand>
        <name>Zn(2+)</name>
        <dbReference type="ChEBI" id="CHEBI:29105"/>
        <label>2</label>
    </ligand>
</feature>
<feature type="binding site" evidence="1">
    <location>
        <position position="156"/>
    </location>
    <ligand>
        <name>Zn(2+)</name>
        <dbReference type="ChEBI" id="CHEBI:29105"/>
        <label>2</label>
    </ligand>
</feature>
<feature type="binding site" evidence="1">
    <location>
        <position position="159"/>
    </location>
    <ligand>
        <name>Zn(2+)</name>
        <dbReference type="ChEBI" id="CHEBI:29105"/>
        <label>1</label>
    </ligand>
</feature>
<feature type="binding site" evidence="1">
    <location>
        <position position="162"/>
    </location>
    <ligand>
        <name>Zn(2+)</name>
        <dbReference type="ChEBI" id="CHEBI:29105"/>
        <label>1</label>
    </ligand>
</feature>
<feature type="binding site" evidence="1">
    <location>
        <position position="173"/>
    </location>
    <ligand>
        <name>Zn(2+)</name>
        <dbReference type="ChEBI" id="CHEBI:29105"/>
        <label>2</label>
    </ligand>
</feature>
<feature type="binding site" evidence="1">
    <location>
        <position position="176"/>
    </location>
    <ligand>
        <name>Zn(2+)</name>
        <dbReference type="ChEBI" id="CHEBI:29105"/>
        <label>2</label>
    </ligand>
</feature>
<feature type="modified residue" description="Phosphoserine" evidence="23 24">
    <location>
        <position position="94"/>
    </location>
</feature>
<feature type="modified residue" description="Phosphoserine" evidence="23 24">
    <location>
        <position position="95"/>
    </location>
</feature>
<feature type="splice variant" id="VSP_045789" description="In isoform 2." evidence="18">
    <original>ERRRPRRNARRLPQDHADSCVVSSDDEELSRDRDVYVTTHTP</original>
    <variation>GPQVLSVVPSAWTDTQRSCRMDVSSFPQNAAMSSVASASVIP</variation>
    <location>
        <begin position="72"/>
        <end position="113"/>
    </location>
</feature>
<feature type="splice variant" id="VSP_045790" description="In isoform 2." evidence="18">
    <location>
        <begin position="114"/>
        <end position="190"/>
    </location>
</feature>
<feature type="mutagenesis site" description="Dominant-negative E2-binding mutant, leads to increased trapping of PARP1 to chromatin; when associated with A-177." evidence="16">
    <original>M</original>
    <variation>S</variation>
    <location>
        <position position="136"/>
    </location>
</feature>
<feature type="mutagenesis site" description="Abolished E3 ubiquitin-protein ligase activity." evidence="16">
    <original>H</original>
    <variation>A</variation>
    <location>
        <position position="156"/>
    </location>
</feature>
<feature type="mutagenesis site" description="Dominant-negative E2-binding mutant, leads to increased trapping of PARP1 to chromatin; when associated with S-136." evidence="16">
    <original>R</original>
    <variation>A</variation>
    <location>
        <position position="177"/>
    </location>
</feature>
<feature type="turn" evidence="26">
    <location>
        <begin position="133"/>
        <end position="135"/>
    </location>
</feature>
<feature type="helix" evidence="26">
    <location>
        <begin position="139"/>
        <end position="144"/>
    </location>
</feature>
<feature type="strand" evidence="26">
    <location>
        <begin position="149"/>
        <end position="152"/>
    </location>
</feature>
<feature type="strand" evidence="25">
    <location>
        <begin position="153"/>
        <end position="155"/>
    </location>
</feature>
<feature type="strand" evidence="26">
    <location>
        <begin position="157"/>
        <end position="159"/>
    </location>
</feature>
<feature type="helix" evidence="26">
    <location>
        <begin position="160"/>
        <end position="169"/>
    </location>
</feature>
<feature type="turn" evidence="26">
    <location>
        <begin position="174"/>
        <end position="176"/>
    </location>
</feature>
<feature type="turn" evidence="26">
    <location>
        <begin position="181"/>
        <end position="183"/>
    </location>
</feature>
<feature type="strand" evidence="26">
    <location>
        <begin position="185"/>
        <end position="187"/>
    </location>
</feature>
<dbReference type="EC" id="2.3.2.27" evidence="16"/>
<dbReference type="EMBL" id="AB000468">
    <property type="protein sequence ID" value="BAA19122.1"/>
    <property type="molecule type" value="mRNA"/>
</dbReference>
<dbReference type="EMBL" id="U95140">
    <property type="protein sequence ID" value="AAC52022.1"/>
    <property type="molecule type" value="mRNA"/>
</dbReference>
<dbReference type="EMBL" id="AK128038">
    <property type="protein sequence ID" value="BAG54620.1"/>
    <property type="molecule type" value="mRNA"/>
</dbReference>
<dbReference type="EMBL" id="AK309509">
    <property type="status" value="NOT_ANNOTATED_CDS"/>
    <property type="molecule type" value="mRNA"/>
</dbReference>
<dbReference type="EMBL" id="AK312534">
    <property type="protein sequence ID" value="BAG35433.1"/>
    <property type="molecule type" value="mRNA"/>
</dbReference>
<dbReference type="EMBL" id="AL110117">
    <property type="status" value="NOT_ANNOTATED_CDS"/>
    <property type="molecule type" value="Genomic_DNA"/>
</dbReference>
<dbReference type="EMBL" id="AL645924">
    <property type="status" value="NOT_ANNOTATED_CDS"/>
    <property type="molecule type" value="Genomic_DNA"/>
</dbReference>
<dbReference type="EMBL" id="BX322586">
    <property type="status" value="NOT_ANNOTATED_CDS"/>
    <property type="molecule type" value="Genomic_DNA"/>
</dbReference>
<dbReference type="EMBL" id="CR450722">
    <property type="status" value="NOT_ANNOTATED_CDS"/>
    <property type="molecule type" value="Genomic_DNA"/>
</dbReference>
<dbReference type="EMBL" id="CR545473">
    <property type="status" value="NOT_ANNOTATED_CDS"/>
    <property type="molecule type" value="Genomic_DNA"/>
</dbReference>
<dbReference type="EMBL" id="BC031935">
    <property type="protein sequence ID" value="AAH31935.1"/>
    <property type="molecule type" value="mRNA"/>
</dbReference>
<dbReference type="CCDS" id="CCDS47001.1">
    <molecule id="P78317-1"/>
</dbReference>
<dbReference type="CCDS" id="CCDS54713.1">
    <molecule id="P78317-2"/>
</dbReference>
<dbReference type="RefSeq" id="NP_001171938.1">
    <molecule id="P78317-1"/>
    <property type="nucleotide sequence ID" value="NM_001185009.3"/>
</dbReference>
<dbReference type="RefSeq" id="NP_001171939.1">
    <molecule id="P78317-2"/>
    <property type="nucleotide sequence ID" value="NM_001185010.3"/>
</dbReference>
<dbReference type="RefSeq" id="NP_002929.1">
    <molecule id="P78317-1"/>
    <property type="nucleotide sequence ID" value="NM_002938.5"/>
</dbReference>
<dbReference type="RefSeq" id="XP_047272018.1">
    <molecule id="P78317-1"/>
    <property type="nucleotide sequence ID" value="XM_047416062.1"/>
</dbReference>
<dbReference type="RefSeq" id="XP_054206669.1">
    <molecule id="P78317-1"/>
    <property type="nucleotide sequence ID" value="XM_054350694.1"/>
</dbReference>
<dbReference type="PDB" id="2EA6">
    <property type="method" value="NMR"/>
    <property type="chains" value="A=122-183"/>
</dbReference>
<dbReference type="PDB" id="2XEU">
    <property type="method" value="X-ray"/>
    <property type="resolution" value="1.50 A"/>
    <property type="chains" value="A=130-190"/>
</dbReference>
<dbReference type="PDB" id="4PPE">
    <property type="method" value="X-ray"/>
    <property type="resolution" value="2.00 A"/>
    <property type="chains" value="A/B=120-190"/>
</dbReference>
<dbReference type="PDBsum" id="2EA6"/>
<dbReference type="PDBsum" id="2XEU"/>
<dbReference type="PDBsum" id="4PPE"/>
<dbReference type="BMRB" id="P78317"/>
<dbReference type="SMR" id="P78317"/>
<dbReference type="BioGRID" id="111974">
    <property type="interactions" value="1416"/>
</dbReference>
<dbReference type="CORUM" id="P78317"/>
<dbReference type="FunCoup" id="P78317">
    <property type="interactions" value="3813"/>
</dbReference>
<dbReference type="IntAct" id="P78317">
    <property type="interactions" value="137"/>
</dbReference>
<dbReference type="MINT" id="P78317"/>
<dbReference type="STRING" id="9606.ENSP00000426503"/>
<dbReference type="BindingDB" id="P78317"/>
<dbReference type="ChEMBL" id="CHEMBL5291604"/>
<dbReference type="GlyGen" id="P78317">
    <property type="glycosylation" value="1 site, 1 O-linked glycan (1 site)"/>
</dbReference>
<dbReference type="iPTMnet" id="P78317"/>
<dbReference type="PhosphoSitePlus" id="P78317"/>
<dbReference type="BioMuta" id="RNF4"/>
<dbReference type="DMDM" id="18202358"/>
<dbReference type="jPOST" id="P78317"/>
<dbReference type="MassIVE" id="P78317"/>
<dbReference type="PaxDb" id="9606-ENSP00000426503"/>
<dbReference type="PeptideAtlas" id="P78317"/>
<dbReference type="ProteomicsDB" id="57562">
    <molecule id="P78317-1"/>
</dbReference>
<dbReference type="Pumba" id="P78317"/>
<dbReference type="Antibodypedia" id="22369">
    <property type="antibodies" value="134 antibodies from 24 providers"/>
</dbReference>
<dbReference type="DNASU" id="6047"/>
<dbReference type="Ensembl" id="ENST00000314289.13">
    <molecule id="P78317-1"/>
    <property type="protein sequence ID" value="ENSP00000315212.8"/>
    <property type="gene ID" value="ENSG00000063978.17"/>
</dbReference>
<dbReference type="Ensembl" id="ENST00000506706.5">
    <molecule id="P78317-1"/>
    <property type="protein sequence ID" value="ENSP00000424076.1"/>
    <property type="gene ID" value="ENSG00000063978.17"/>
</dbReference>
<dbReference type="Ensembl" id="ENST00000511600.5">
    <molecule id="P78317-1"/>
    <property type="protein sequence ID" value="ENSP00000426503.1"/>
    <property type="gene ID" value="ENSG00000063978.17"/>
</dbReference>
<dbReference type="Ensembl" id="ENST00000511859.5">
    <molecule id="P78317-2"/>
    <property type="protein sequence ID" value="ENSP00000426615.1"/>
    <property type="gene ID" value="ENSG00000063978.17"/>
</dbReference>
<dbReference type="Ensembl" id="ENST00000541204.5">
    <molecule id="P78317-2"/>
    <property type="protein sequence ID" value="ENSP00000446369.2"/>
    <property type="gene ID" value="ENSG00000063978.17"/>
</dbReference>
<dbReference type="GeneID" id="6047"/>
<dbReference type="KEGG" id="hsa:6047"/>
<dbReference type="MANE-Select" id="ENST00000314289.13">
    <property type="protein sequence ID" value="ENSP00000315212.8"/>
    <property type="RefSeq nucleotide sequence ID" value="NM_002938.5"/>
    <property type="RefSeq protein sequence ID" value="NP_002929.1"/>
</dbReference>
<dbReference type="UCSC" id="uc003gfb.4">
    <molecule id="P78317-1"/>
    <property type="organism name" value="human"/>
</dbReference>
<dbReference type="AGR" id="HGNC:10067"/>
<dbReference type="CTD" id="6047"/>
<dbReference type="DisGeNET" id="6047"/>
<dbReference type="GeneCards" id="RNF4"/>
<dbReference type="HGNC" id="HGNC:10067">
    <property type="gene designation" value="RNF4"/>
</dbReference>
<dbReference type="HPA" id="ENSG00000063978">
    <property type="expression patterns" value="Low tissue specificity"/>
</dbReference>
<dbReference type="MIM" id="602850">
    <property type="type" value="gene"/>
</dbReference>
<dbReference type="neXtProt" id="NX_P78317"/>
<dbReference type="OpenTargets" id="ENSG00000063978"/>
<dbReference type="PharmGKB" id="PA34439"/>
<dbReference type="VEuPathDB" id="HostDB:ENSG00000063978"/>
<dbReference type="eggNOG" id="KOG0320">
    <property type="taxonomic scope" value="Eukaryota"/>
</dbReference>
<dbReference type="GeneTree" id="ENSGT00390000010318"/>
<dbReference type="HOGENOM" id="CLU_106856_0_0_1"/>
<dbReference type="InParanoid" id="P78317"/>
<dbReference type="OMA" id="ICMDVYS"/>
<dbReference type="PAN-GO" id="P78317">
    <property type="GO annotations" value="3 GO annotations based on evolutionary models"/>
</dbReference>
<dbReference type="PhylomeDB" id="P78317"/>
<dbReference type="TreeFam" id="TF328387"/>
<dbReference type="PathwayCommons" id="P78317"/>
<dbReference type="Reactome" id="R-HSA-5693607">
    <property type="pathway name" value="Processing of DNA double-strand break ends"/>
</dbReference>
<dbReference type="Reactome" id="R-HSA-983168">
    <property type="pathway name" value="Antigen processing: Ubiquitination &amp; Proteasome degradation"/>
</dbReference>
<dbReference type="SignaLink" id="P78317"/>
<dbReference type="SIGNOR" id="P78317"/>
<dbReference type="UniPathway" id="UPA00143"/>
<dbReference type="BioGRID-ORCS" id="6047">
    <property type="hits" value="528 hits in 1204 CRISPR screens"/>
</dbReference>
<dbReference type="CD-CODE" id="B5B9A610">
    <property type="entry name" value="PML body"/>
</dbReference>
<dbReference type="ChiTaRS" id="RNF4">
    <property type="organism name" value="human"/>
</dbReference>
<dbReference type="EvolutionaryTrace" id="P78317"/>
<dbReference type="GeneWiki" id="RNF4"/>
<dbReference type="GenomeRNAi" id="6047"/>
<dbReference type="Pharos" id="P78317">
    <property type="development level" value="Tbio"/>
</dbReference>
<dbReference type="PRO" id="PR:P78317"/>
<dbReference type="Proteomes" id="UP000005640">
    <property type="component" value="Chromosome 4"/>
</dbReference>
<dbReference type="RNAct" id="P78317">
    <property type="molecule type" value="protein"/>
</dbReference>
<dbReference type="Bgee" id="ENSG00000063978">
    <property type="expression patterns" value="Expressed in thymus and 204 other cell types or tissues"/>
</dbReference>
<dbReference type="ExpressionAtlas" id="P78317">
    <property type="expression patterns" value="baseline and differential"/>
</dbReference>
<dbReference type="GO" id="GO:0005737">
    <property type="term" value="C:cytoplasm"/>
    <property type="evidence" value="ECO:0000314"/>
    <property type="project" value="UniProtKB"/>
</dbReference>
<dbReference type="GO" id="GO:1990752">
    <property type="term" value="C:microtubule end"/>
    <property type="evidence" value="ECO:0000314"/>
    <property type="project" value="HPA"/>
</dbReference>
<dbReference type="GO" id="GO:0016604">
    <property type="term" value="C:nuclear body"/>
    <property type="evidence" value="ECO:0000314"/>
    <property type="project" value="HPA"/>
</dbReference>
<dbReference type="GO" id="GO:0005654">
    <property type="term" value="C:nucleoplasm"/>
    <property type="evidence" value="ECO:0000314"/>
    <property type="project" value="HPA"/>
</dbReference>
<dbReference type="GO" id="GO:0005634">
    <property type="term" value="C:nucleus"/>
    <property type="evidence" value="ECO:0000314"/>
    <property type="project" value="UniProtKB"/>
</dbReference>
<dbReference type="GO" id="GO:0016605">
    <property type="term" value="C:PML body"/>
    <property type="evidence" value="ECO:0007669"/>
    <property type="project" value="UniProtKB-SubCell"/>
</dbReference>
<dbReference type="GO" id="GO:0003677">
    <property type="term" value="F:DNA binding"/>
    <property type="evidence" value="ECO:0000250"/>
    <property type="project" value="UniProtKB"/>
</dbReference>
<dbReference type="GO" id="GO:0042802">
    <property type="term" value="F:identical protein binding"/>
    <property type="evidence" value="ECO:0000353"/>
    <property type="project" value="IntAct"/>
</dbReference>
<dbReference type="GO" id="GO:0031491">
    <property type="term" value="F:nucleosome binding"/>
    <property type="evidence" value="ECO:0000250"/>
    <property type="project" value="UniProtKB"/>
</dbReference>
<dbReference type="GO" id="GO:0032184">
    <property type="term" value="F:SUMO polymer binding"/>
    <property type="evidence" value="ECO:0000314"/>
    <property type="project" value="UniProtKB"/>
</dbReference>
<dbReference type="GO" id="GO:0061630">
    <property type="term" value="F:ubiquitin protein ligase activity"/>
    <property type="evidence" value="ECO:0000314"/>
    <property type="project" value="UniProtKB"/>
</dbReference>
<dbReference type="GO" id="GO:0004842">
    <property type="term" value="F:ubiquitin-protein transferase activity"/>
    <property type="evidence" value="ECO:0000250"/>
    <property type="project" value="UniProtKB"/>
</dbReference>
<dbReference type="GO" id="GO:0008270">
    <property type="term" value="F:zinc ion binding"/>
    <property type="evidence" value="ECO:0007669"/>
    <property type="project" value="UniProtKB-KW"/>
</dbReference>
<dbReference type="GO" id="GO:0120186">
    <property type="term" value="P:negative regulation of protein localization to chromatin"/>
    <property type="evidence" value="ECO:0000314"/>
    <property type="project" value="UniProt"/>
</dbReference>
<dbReference type="GO" id="GO:0045893">
    <property type="term" value="P:positive regulation of DNA-templated transcription"/>
    <property type="evidence" value="ECO:0000250"/>
    <property type="project" value="UniProtKB"/>
</dbReference>
<dbReference type="GO" id="GO:0045944">
    <property type="term" value="P:positive regulation of transcription by RNA polymerase II"/>
    <property type="evidence" value="ECO:0000314"/>
    <property type="project" value="UniProtKB"/>
</dbReference>
<dbReference type="GO" id="GO:0043161">
    <property type="term" value="P:proteasome-mediated ubiquitin-dependent protein catabolic process"/>
    <property type="evidence" value="ECO:0000315"/>
    <property type="project" value="UniProtKB"/>
</dbReference>
<dbReference type="GO" id="GO:0051865">
    <property type="term" value="P:protein autoubiquitination"/>
    <property type="evidence" value="ECO:0000250"/>
    <property type="project" value="UniProtKB"/>
</dbReference>
<dbReference type="GO" id="GO:0070979">
    <property type="term" value="P:protein K11-linked ubiquitination"/>
    <property type="evidence" value="ECO:0000250"/>
    <property type="project" value="UniProtKB"/>
</dbReference>
<dbReference type="GO" id="GO:0070936">
    <property type="term" value="P:protein K48-linked ubiquitination"/>
    <property type="evidence" value="ECO:0000250"/>
    <property type="project" value="UniProtKB"/>
</dbReference>
<dbReference type="GO" id="GO:0085020">
    <property type="term" value="P:protein K6-linked ubiquitination"/>
    <property type="evidence" value="ECO:0000250"/>
    <property type="project" value="UniProtKB"/>
</dbReference>
<dbReference type="GO" id="GO:0070534">
    <property type="term" value="P:protein K63-linked ubiquitination"/>
    <property type="evidence" value="ECO:0000250"/>
    <property type="project" value="UniProtKB"/>
</dbReference>
<dbReference type="GO" id="GO:0090234">
    <property type="term" value="P:regulation of kinetochore assembly"/>
    <property type="evidence" value="ECO:0000315"/>
    <property type="project" value="UniProtKB"/>
</dbReference>
<dbReference type="GO" id="GO:0090169">
    <property type="term" value="P:regulation of spindle assembly"/>
    <property type="evidence" value="ECO:0000315"/>
    <property type="project" value="UniProtKB"/>
</dbReference>
<dbReference type="GO" id="GO:0046685">
    <property type="term" value="P:response to arsenic-containing substance"/>
    <property type="evidence" value="ECO:0000314"/>
    <property type="project" value="UniProtKB"/>
</dbReference>
<dbReference type="CDD" id="cd16533">
    <property type="entry name" value="RING-HC_RNF4"/>
    <property type="match status" value="1"/>
</dbReference>
<dbReference type="FunFam" id="3.30.40.10:FF:000173">
    <property type="entry name" value="E3 ubiquitin-protein ligase RNF4"/>
    <property type="match status" value="1"/>
</dbReference>
<dbReference type="Gene3D" id="3.30.40.10">
    <property type="entry name" value="Zinc/RING finger domain, C3HC4 (zinc finger)"/>
    <property type="match status" value="1"/>
</dbReference>
<dbReference type="InterPro" id="IPR043295">
    <property type="entry name" value="RING-HC_RNF4"/>
</dbReference>
<dbReference type="InterPro" id="IPR047134">
    <property type="entry name" value="RNF4"/>
</dbReference>
<dbReference type="InterPro" id="IPR001841">
    <property type="entry name" value="Znf_RING"/>
</dbReference>
<dbReference type="InterPro" id="IPR013083">
    <property type="entry name" value="Znf_RING/FYVE/PHD"/>
</dbReference>
<dbReference type="InterPro" id="IPR017907">
    <property type="entry name" value="Znf_RING_CS"/>
</dbReference>
<dbReference type="PANTHER" id="PTHR23041:SF78">
    <property type="entry name" value="E3 UBIQUITIN-PROTEIN LIGASE RNF4"/>
    <property type="match status" value="1"/>
</dbReference>
<dbReference type="PANTHER" id="PTHR23041">
    <property type="entry name" value="RING FINGER DOMAIN-CONTAINING"/>
    <property type="match status" value="1"/>
</dbReference>
<dbReference type="Pfam" id="PF13639">
    <property type="entry name" value="zf-RING_2"/>
    <property type="match status" value="1"/>
</dbReference>
<dbReference type="SMART" id="SM00184">
    <property type="entry name" value="RING"/>
    <property type="match status" value="1"/>
</dbReference>
<dbReference type="SUPFAM" id="SSF57850">
    <property type="entry name" value="RING/U-box"/>
    <property type="match status" value="1"/>
</dbReference>
<dbReference type="PROSITE" id="PS00518">
    <property type="entry name" value="ZF_RING_1"/>
    <property type="match status" value="1"/>
</dbReference>
<dbReference type="PROSITE" id="PS50089">
    <property type="entry name" value="ZF_RING_2"/>
    <property type="match status" value="1"/>
</dbReference>
<name>RNF4_HUMAN</name>
<accession>P78317</accession>
<accession>B2R6D6</accession>
<accession>D6RF58</accession>
<accession>Q49AR8</accession>
<protein>
    <recommendedName>
        <fullName evidence="21">E3 ubiquitin-protein ligase RNF4</fullName>
        <ecNumber evidence="16">2.3.2.27</ecNumber>
    </recommendedName>
    <alternativeName>
        <fullName evidence="21">RING finger protein 4</fullName>
    </alternativeName>
    <alternativeName>
        <fullName evidence="19">Small nuclear ring finger protein</fullName>
        <shortName evidence="19">Protein SNURF</shortName>
    </alternativeName>
</protein>
<proteinExistence type="evidence at protein level"/>
<organism>
    <name type="scientific">Homo sapiens</name>
    <name type="common">Human</name>
    <dbReference type="NCBI Taxonomy" id="9606"/>
    <lineage>
        <taxon>Eukaryota</taxon>
        <taxon>Metazoa</taxon>
        <taxon>Chordata</taxon>
        <taxon>Craniata</taxon>
        <taxon>Vertebrata</taxon>
        <taxon>Euteleostomi</taxon>
        <taxon>Mammalia</taxon>
        <taxon>Eutheria</taxon>
        <taxon>Euarchontoglires</taxon>
        <taxon>Primates</taxon>
        <taxon>Haplorrhini</taxon>
        <taxon>Catarrhini</taxon>
        <taxon>Hominidae</taxon>
        <taxon>Homo</taxon>
    </lineage>
</organism>
<comment type="function">
    <text evidence="6 8 9 10 11 12 13 16">E3 ubiquitin-protein ligase which binds polysumoylated chains covalently attached to proteins and mediates 'Lys-6'-, 'Lys-11'-, 'Lys-48'- and 'Lys-63'-linked polyubiquitination of those substrates and their subsequent targeting to the proteasome for degradation (PubMed:18408734, PubMed:19307308, PubMed:35013556). Regulates the degradation of several proteins including PML and the transcriptional activator PEA3 (PubMed:18408734, PubMed:19307308, PubMed:20943951). Involved in chromosome alignment and spindle assembly, it regulates the kinetochore CENPH-CENPI-CENPK complex by targeting polysumoylated CENPI to proteasomal degradation (PubMed:20212317). Regulates the cellular responses to hypoxia and heat shock through degradation of respectively EPAS1 and PARP1 (PubMed:19779455, PubMed:20026589). Alternatively, it may also bind DNA/nucleosomes and have a more direct role in the regulation of transcription for instance enhancing basal transcription and steroid receptor-mediated transcriptional activation (PubMed:12885770). Catalyzes ubiquitination of sumoylated PARP1 in response to PARP1 trapping to chromatin, leading to PARP1 removal from chromatin by VCP/p97 (PubMed:35013556).</text>
</comment>
<comment type="catalytic activity">
    <reaction evidence="16">
        <text>S-ubiquitinyl-[E2 ubiquitin-conjugating enzyme]-L-cysteine + [acceptor protein]-L-lysine = [E2 ubiquitin-conjugating enzyme]-L-cysteine + N(6)-ubiquitinyl-[acceptor protein]-L-lysine.</text>
        <dbReference type="EC" id="2.3.2.27"/>
    </reaction>
</comment>
<comment type="pathway">
    <text evidence="16">Protein modification; protein ubiquitination.</text>
</comment>
<comment type="subunit">
    <text evidence="1 2 5 6 7 13 14 15">Homodimer (via RING-type zinc finger domain) (By similarity). Interacts with GSC2 (By similarity). Interacts with AR/the androgen receptor and TBP (By similarity). Interacts with TCF20 (By similarity). Interacts with PATZ1 (PubMed:10713105). Interacts with TRPS1; negatively regulates TRPS1 transcriptional repressor activity (PubMed:12885770). Interacts with PML (isoform PML-1, isoform PML-2, isoform PML-3, isoform PML-4, isoform PML-5 and isoform PML-6) (PubMed:15707587, PubMed:20943951, PubMed:23028697). Interacts with PRDM1/Blimp-1 (PubMed:28842558).</text>
</comment>
<comment type="interaction">
    <interactant intactId="EBI-2340927">
        <id>P78317</id>
    </interactant>
    <interactant intactId="EBI-353944">
        <id>P60709</id>
        <label>ACTB</label>
    </interactant>
    <organismsDiffer>false</organismsDiffer>
    <experiments>3</experiments>
</comment>
<comment type="interaction">
    <interactant intactId="EBI-2340927">
        <id>P78317</id>
    </interactant>
    <interactant intactId="EBI-1042725">
        <id>Q02040</id>
        <label>AKAP17A</label>
    </interactant>
    <organismsDiffer>false</organismsDiffer>
    <experiments>5</experiments>
</comment>
<comment type="interaction">
    <interactant intactId="EBI-2340927">
        <id>P78317</id>
    </interactant>
    <interactant intactId="EBI-12805486">
        <id>A6NKF2</id>
        <label>ARID3C</label>
    </interactant>
    <organismsDiffer>false</organismsDiffer>
    <experiments>3</experiments>
</comment>
<comment type="interaction">
    <interactant intactId="EBI-2340927">
        <id>P78317</id>
    </interactant>
    <interactant intactId="EBI-742108">
        <id>Q96B23</id>
        <label>ARK2N</label>
    </interactant>
    <organismsDiffer>false</organismsDiffer>
    <experiments>3</experiments>
</comment>
<comment type="interaction">
    <interactant intactId="EBI-2340927">
        <id>P78317</id>
    </interactant>
    <interactant intactId="EBI-1170906">
        <id>P15336</id>
        <label>ATF2</label>
    </interactant>
    <organismsDiffer>false</organismsDiffer>
    <experiments>3</experiments>
</comment>
<comment type="interaction">
    <interactant intactId="EBI-2340927">
        <id>P78317</id>
    </interactant>
    <interactant intactId="EBI-78035">
        <id>Q07817</id>
        <label>BCL2L1</label>
    </interactant>
    <organismsDiffer>false</organismsDiffer>
    <experiments>3</experiments>
</comment>
<comment type="interaction">
    <interactant intactId="EBI-2340927">
        <id>P78317</id>
    </interactant>
    <interactant intactId="EBI-935503">
        <id>Q9H0C5</id>
        <label>BTBD1</label>
    </interactant>
    <organismsDiffer>false</organismsDiffer>
    <experiments>3</experiments>
</comment>
<comment type="interaction">
    <interactant intactId="EBI-2340927">
        <id>P78317</id>
    </interactant>
    <interactant intactId="EBI-311155">
        <id>Q9Y2F9</id>
        <label>BTBD3</label>
    </interactant>
    <organismsDiffer>false</organismsDiffer>
    <experiments>3</experiments>
</comment>
<comment type="interaction">
    <interactant intactId="EBI-2340927">
        <id>P78317</id>
    </interactant>
    <interactant intactId="EBI-725606">
        <id>Q9NWQ9</id>
        <label>C14orf119</label>
    </interactant>
    <organismsDiffer>false</organismsDiffer>
    <experiments>3</experiments>
</comment>
<comment type="interaction">
    <interactant intactId="EBI-2340927">
        <id>P78317</id>
    </interactant>
    <interactant intactId="EBI-11523526">
        <id>Q13554-3</id>
        <label>CAMK2B</label>
    </interactant>
    <organismsDiffer>false</organismsDiffer>
    <experiments>3</experiments>
</comment>
<comment type="interaction">
    <interactant intactId="EBI-2340927">
        <id>P78317</id>
    </interactant>
    <interactant intactId="EBI-11534483">
        <id>Q13557-8</id>
        <label>CAMK2D</label>
    </interactant>
    <organismsDiffer>false</organismsDiffer>
    <experiments>3</experiments>
</comment>
<comment type="interaction">
    <interactant intactId="EBI-2340927">
        <id>P78317</id>
    </interactant>
    <interactant intactId="EBI-1034732">
        <id>P13500</id>
        <label>CCL2</label>
    </interactant>
    <organismsDiffer>false</organismsDiffer>
    <experiments>3</experiments>
</comment>
<comment type="interaction">
    <interactant intactId="EBI-2340927">
        <id>P78317</id>
    </interactant>
    <interactant intactId="EBI-351218">
        <id>Q9Y281</id>
        <label>CFL2</label>
    </interactant>
    <organismsDiffer>false</organismsDiffer>
    <experiments>3</experiments>
</comment>
<comment type="interaction">
    <interactant intactId="EBI-2340927">
        <id>P78317</id>
    </interactant>
    <interactant intactId="EBI-711855">
        <id>P16220</id>
        <label>CREB1</label>
    </interactant>
    <organismsDiffer>false</organismsDiffer>
    <experiments>3</experiments>
</comment>
<comment type="interaction">
    <interactant intactId="EBI-2340927">
        <id>P78317</id>
    </interactant>
    <interactant intactId="EBI-77321">
        <id>Q9UER7</id>
        <label>DAXX</label>
    </interactant>
    <organismsDiffer>false</organismsDiffer>
    <experiments>3</experiments>
</comment>
<comment type="interaction">
    <interactant intactId="EBI-2340927">
        <id>P78317</id>
    </interactant>
    <interactant intactId="EBI-348253">
        <id>O00148</id>
        <label>DDX39A</label>
    </interactant>
    <organismsDiffer>false</organismsDiffer>
    <experiments>3</experiments>
</comment>
<comment type="interaction">
    <interactant intactId="EBI-2340927">
        <id>P78317</id>
    </interactant>
    <interactant intactId="EBI-348622">
        <id>Q13838</id>
        <label>DDX39B</label>
    </interactant>
    <organismsDiffer>false</organismsDiffer>
    <experiments>3</experiments>
</comment>
<comment type="interaction">
    <interactant intactId="EBI-2340927">
        <id>P78317</id>
    </interactant>
    <interactant intactId="EBI-1055572">
        <id>P17661</id>
        <label>DES</label>
    </interactant>
    <organismsDiffer>false</organismsDiffer>
    <experiments>3</experiments>
</comment>
<comment type="interaction">
    <interactant intactId="EBI-2340927">
        <id>P78317</id>
    </interactant>
    <interactant intactId="EBI-2806959">
        <id>Q6ICB0</id>
        <label>DESI1</label>
    </interactant>
    <organismsDiffer>false</organismsDiffer>
    <experiments>3</experiments>
</comment>
<comment type="interaction">
    <interactant intactId="EBI-2340927">
        <id>P78317</id>
    </interactant>
    <interactant intactId="EBI-2339219">
        <id>Q08426</id>
        <label>EHHADH</label>
    </interactant>
    <organismsDiffer>false</organismsDiffer>
    <experiments>3</experiments>
</comment>
<comment type="interaction">
    <interactant intactId="EBI-2340927">
        <id>P78317</id>
    </interactant>
    <interactant intactId="EBI-372412">
        <id>P11474</id>
        <label>ESRRA</label>
    </interactant>
    <organismsDiffer>false</organismsDiffer>
    <experiments>3</experiments>
</comment>
<comment type="interaction">
    <interactant intactId="EBI-2340927">
        <id>P78317</id>
    </interactant>
    <interactant intactId="EBI-494804">
        <id>Q13158</id>
        <label>FADD</label>
    </interactant>
    <organismsDiffer>false</organismsDiffer>
    <experiments>5</experiments>
</comment>
<comment type="interaction">
    <interactant intactId="EBI-2340927">
        <id>P78317</id>
    </interactant>
    <interactant intactId="EBI-8638992">
        <id>Q9NWS6</id>
        <label>FAM118A</label>
    </interactant>
    <organismsDiffer>false</organismsDiffer>
    <experiments>3</experiments>
</comment>
<comment type="interaction">
    <interactant intactId="EBI-2340927">
        <id>P78317</id>
    </interactant>
    <interactant intactId="EBI-8468186">
        <id>Q8IZU1</id>
        <label>FAM9A</label>
    </interactant>
    <organismsDiffer>false</organismsDiffer>
    <experiments>3</experiments>
</comment>
<comment type="interaction">
    <interactant intactId="EBI-2340927">
        <id>P78317</id>
    </interactant>
    <interactant intactId="EBI-744771">
        <id>O75344</id>
        <label>FKBP6</label>
    </interactant>
    <organismsDiffer>false</organismsDiffer>
    <experiments>3</experiments>
</comment>
<comment type="interaction">
    <interactant intactId="EBI-2340927">
        <id>P78317</id>
    </interactant>
    <interactant intactId="EBI-2548508">
        <id>Q96IK5</id>
        <label>GMCL1</label>
    </interactant>
    <organismsDiffer>false</organismsDiffer>
    <experiments>5</experiments>
</comment>
<comment type="interaction">
    <interactant intactId="EBI-2340927">
        <id>P78317</id>
    </interactant>
    <interactant intactId="EBI-740220">
        <id>O14964</id>
        <label>HGS</label>
    </interactant>
    <organismsDiffer>false</organismsDiffer>
    <experiments>3</experiments>
</comment>
<comment type="interaction">
    <interactant intactId="EBI-2340927">
        <id>P78317</id>
    </interactant>
    <interactant intactId="EBI-357966">
        <id>P07910</id>
        <label>HNRNPC</label>
    </interactant>
    <organismsDiffer>false</organismsDiffer>
    <experiments>3</experiments>
</comment>
<comment type="interaction">
    <interactant intactId="EBI-2340927">
        <id>P78317</id>
    </interactant>
    <interactant intactId="EBI-1046507">
        <id>O60812</id>
        <label>HNRNPCL1</label>
    </interactant>
    <organismsDiffer>false</organismsDiffer>
    <experiments>3</experiments>
</comment>
<comment type="interaction">
    <interactant intactId="EBI-2340927">
        <id>P78317</id>
    </interactant>
    <interactant intactId="EBI-9512317">
        <id>B2RXH8</id>
        <label>HNRNPCL2</label>
    </interactant>
    <organismsDiffer>false</organismsDiffer>
    <experiments>3</experiments>
</comment>
<comment type="interaction">
    <interactant intactId="EBI-2340927">
        <id>P78317</id>
    </interactant>
    <interactant intactId="EBI-351590">
        <id>P31943</id>
        <label>HNRNPH1</label>
    </interactant>
    <organismsDiffer>false</organismsDiffer>
    <experiments>3</experiments>
</comment>
<comment type="interaction">
    <interactant intactId="EBI-2340927">
        <id>P78317</id>
    </interactant>
    <interactant intactId="EBI-7060731">
        <id>P61978-2</id>
        <label>HNRNPK</label>
    </interactant>
    <organismsDiffer>false</organismsDiffer>
    <experiments>3</experiments>
</comment>
<comment type="interaction">
    <interactant intactId="EBI-2340927">
        <id>P78317</id>
    </interactant>
    <interactant intactId="EBI-11522367">
        <id>Q13422-7</id>
        <label>IKZF1</label>
    </interactant>
    <organismsDiffer>false</organismsDiffer>
    <experiments>3</experiments>
</comment>
<comment type="interaction">
    <interactant intactId="EBI-2340927">
        <id>P78317</id>
    </interactant>
    <interactant intactId="EBI-12188657">
        <id>P20839-3</id>
        <label>IMPDH1</label>
    </interactant>
    <organismsDiffer>false</organismsDiffer>
    <experiments>3</experiments>
</comment>
<comment type="interaction">
    <interactant intactId="EBI-2340927">
        <id>P78317</id>
    </interactant>
    <interactant intactId="EBI-740929">
        <id>Q53G59</id>
        <label>KLHL12</label>
    </interactant>
    <organismsDiffer>false</organismsDiffer>
    <experiments>3</experiments>
</comment>
<comment type="interaction">
    <interactant intactId="EBI-2340927">
        <id>P78317</id>
    </interactant>
    <interactant intactId="EBI-10245913">
        <id>Q5T7P3</id>
        <label>LCE1B</label>
    </interactant>
    <organismsDiffer>false</organismsDiffer>
    <experiments>3</experiments>
</comment>
<comment type="interaction">
    <interactant intactId="EBI-2340927">
        <id>P78317</id>
    </interactant>
    <interactant intactId="EBI-11741311">
        <id>Q5T752</id>
        <label>LCE1D</label>
    </interactant>
    <organismsDiffer>false</organismsDiffer>
    <experiments>3</experiments>
</comment>
<comment type="interaction">
    <interactant intactId="EBI-2340927">
        <id>P78317</id>
    </interactant>
    <interactant intactId="EBI-11955335">
        <id>Q5T753</id>
        <label>LCE1E</label>
    </interactant>
    <organismsDiffer>false</organismsDiffer>
    <experiments>3</experiments>
</comment>
<comment type="interaction">
    <interactant intactId="EBI-2340927">
        <id>P78317</id>
    </interactant>
    <interactant intactId="EBI-11958008">
        <id>Q5T754</id>
        <label>LCE1F</label>
    </interactant>
    <organismsDiffer>false</organismsDiffer>
    <experiments>3</experiments>
</comment>
<comment type="interaction">
    <interactant intactId="EBI-2340927">
        <id>P78317</id>
    </interactant>
    <interactant intactId="EBI-11478468">
        <id>O14633</id>
        <label>LCE2B</label>
    </interactant>
    <organismsDiffer>false</organismsDiffer>
    <experiments>3</experiments>
</comment>
<comment type="interaction">
    <interactant intactId="EBI-2340927">
        <id>P78317</id>
    </interactant>
    <interactant intactId="EBI-11973993">
        <id>Q5TA81</id>
        <label>LCE2C</label>
    </interactant>
    <organismsDiffer>false</organismsDiffer>
    <experiments>5</experiments>
</comment>
<comment type="interaction">
    <interactant intactId="EBI-2340927">
        <id>P78317</id>
    </interactant>
    <interactant intactId="EBI-10246750">
        <id>Q5TA82</id>
        <label>LCE2D</label>
    </interactant>
    <organismsDiffer>false</organismsDiffer>
    <experiments>3</experiments>
</comment>
<comment type="interaction">
    <interactant intactId="EBI-2340927">
        <id>P78317</id>
    </interactant>
    <interactant intactId="EBI-11974495">
        <id>Q5TA77</id>
        <label>LCE3B</label>
    </interactant>
    <organismsDiffer>false</organismsDiffer>
    <experiments>3</experiments>
</comment>
<comment type="interaction">
    <interactant intactId="EBI-2340927">
        <id>P78317</id>
    </interactant>
    <interactant intactId="EBI-11955689">
        <id>Q5TCM9</id>
        <label>LCE5A</label>
    </interactant>
    <organismsDiffer>false</organismsDiffer>
    <experiments>3</experiments>
</comment>
<comment type="interaction">
    <interactant intactId="EBI-2340927">
        <id>P78317</id>
    </interactant>
    <interactant intactId="EBI-1044504">
        <id>Q9BS40</id>
        <label>LXN</label>
    </interactant>
    <organismsDiffer>false</organismsDiffer>
    <experiments>3</experiments>
</comment>
<comment type="interaction">
    <interactant intactId="EBI-2340927">
        <id>P78317</id>
    </interactant>
    <interactant intactId="EBI-447677">
        <id>Q99836</id>
        <label>MYD88</label>
    </interactant>
    <organismsDiffer>false</organismsDiffer>
    <experiments>3</experiments>
</comment>
<comment type="interaction">
    <interactant intactId="EBI-2340927">
        <id>P78317</id>
    </interactant>
    <interactant intactId="EBI-1385894">
        <id>Q99801</id>
        <label>NKX3-1</label>
    </interactant>
    <organismsDiffer>false</organismsDiffer>
    <experiments>3</experiments>
</comment>
<comment type="interaction">
    <interactant intactId="EBI-2340927">
        <id>P78317</id>
    </interactant>
    <interactant intactId="EBI-3917542">
        <id>Q9HAN9</id>
        <label>NMNAT1</label>
    </interactant>
    <organismsDiffer>false</organismsDiffer>
    <experiments>3</experiments>
</comment>
<comment type="interaction">
    <interactant intactId="EBI-2340927">
        <id>P78317</id>
    </interactant>
    <interactant intactId="EBI-741158">
        <id>Q96HA8</id>
        <label>NTAQ1</label>
    </interactant>
    <organismsDiffer>false</organismsDiffer>
    <experiments>3</experiments>
</comment>
<comment type="interaction">
    <interactant intactId="EBI-2340927">
        <id>P78317</id>
    </interactant>
    <interactant intactId="EBI-18577082">
        <id>O15381-5</id>
        <label>NVL</label>
    </interactant>
    <organismsDiffer>false</organismsDiffer>
    <experiments>3</experiments>
</comment>
<comment type="interaction">
    <interactant intactId="EBI-2340927">
        <id>P78317</id>
    </interactant>
    <interactant intactId="EBI-712261">
        <id>P22234</id>
        <label>PAICS</label>
    </interactant>
    <organismsDiffer>false</organismsDiffer>
    <experiments>3</experiments>
</comment>
<comment type="interaction">
    <interactant intactId="EBI-2340927">
        <id>P78317</id>
    </interactant>
    <interactant intactId="EBI-11983983">
        <id>P57721-2</id>
        <label>PCBP3</label>
    </interactant>
    <organismsDiffer>false</organismsDiffer>
    <experiments>3</experiments>
</comment>
<comment type="interaction">
    <interactant intactId="EBI-2340927">
        <id>P78317</id>
    </interactant>
    <interactant intactId="EBI-725403">
        <id>P78364</id>
        <label>PHC1</label>
    </interactant>
    <organismsDiffer>false</organismsDiffer>
    <experiments>5</experiments>
</comment>
<comment type="interaction">
    <interactant intactId="EBI-2340927">
        <id>P78317</id>
    </interactant>
    <interactant intactId="EBI-9027467">
        <id>O75360</id>
        <label>PROP1</label>
    </interactant>
    <organismsDiffer>false</organismsDiffer>
    <experiments>3</experiments>
</comment>
<comment type="interaction">
    <interactant intactId="EBI-2340927">
        <id>P78317</id>
    </interactant>
    <interactant intactId="EBI-12754095">
        <id>P86480</id>
        <label>PRR20D</label>
    </interactant>
    <organismsDiffer>false</organismsDiffer>
    <experiments>3</experiments>
</comment>
<comment type="interaction">
    <interactant intactId="EBI-2340927">
        <id>P78317</id>
    </interactant>
    <interactant intactId="EBI-372094">
        <id>Q9BQY4</id>
        <label>RHOXF2</label>
    </interactant>
    <organismsDiffer>false</organismsDiffer>
    <experiments>3</experiments>
</comment>
<comment type="interaction">
    <interactant intactId="EBI-2340927">
        <id>P78317</id>
    </interactant>
    <interactant intactId="EBI-2340927">
        <id>P78317</id>
        <label>RNF4</label>
    </interactant>
    <organismsDiffer>false</organismsDiffer>
    <experiments>2</experiments>
</comment>
<comment type="interaction">
    <interactant intactId="EBI-2340927">
        <id>P78317</id>
    </interactant>
    <interactant intactId="EBI-11984663">
        <id>Q06455-2</id>
        <label>RUNX1T1</label>
    </interactant>
    <organismsDiffer>false</organismsDiffer>
    <experiments>3</experiments>
</comment>
<comment type="interaction">
    <interactant intactId="EBI-2340927">
        <id>P78317</id>
    </interactant>
    <interactant intactId="EBI-2513111">
        <id>Q9UQR0</id>
        <label>SCML2</label>
    </interactant>
    <organismsDiffer>false</organismsDiffer>
    <experiments>3</experiments>
</comment>
<comment type="interaction">
    <interactant intactId="EBI-2340927">
        <id>P78317</id>
    </interactant>
    <interactant intactId="EBI-727037">
        <id>Q9UH03</id>
        <label>SEPTIN3</label>
    </interactant>
    <organismsDiffer>false</organismsDiffer>
    <experiments>3</experiments>
</comment>
<comment type="interaction">
    <interactant intactId="EBI-2340927">
        <id>P78317</id>
    </interactant>
    <interactant intactId="EBI-12004298">
        <id>O75971-2</id>
        <label>SNAPC5</label>
    </interactant>
    <organismsDiffer>false</organismsDiffer>
    <experiments>3</experiments>
</comment>
<comment type="interaction">
    <interactant intactId="EBI-2340927">
        <id>P78317</id>
    </interactant>
    <interactant intactId="EBI-11954419">
        <id>P35711-4</id>
        <label>SOX5</label>
    </interactant>
    <organismsDiffer>false</organismsDiffer>
    <experiments>3</experiments>
</comment>
<comment type="interaction">
    <interactant intactId="EBI-2340927">
        <id>P78317</id>
    </interactant>
    <interactant intactId="EBI-2515299">
        <id>O43805</id>
        <label>SSNA1</label>
    </interactant>
    <organismsDiffer>false</organismsDiffer>
    <experiments>3</experiments>
</comment>
<comment type="interaction">
    <interactant intactId="EBI-2340927">
        <id>P78317</id>
    </interactant>
    <interactant intactId="EBI-712466">
        <id>Q16623</id>
        <label>STX1A</label>
    </interactant>
    <organismsDiffer>false</organismsDiffer>
    <experiments>3</experiments>
</comment>
<comment type="interaction">
    <interactant intactId="EBI-2340927">
        <id>P78317</id>
    </interactant>
    <interactant intactId="EBI-11956649">
        <id>P32856-2</id>
        <label>STX2</label>
    </interactant>
    <organismsDiffer>false</organismsDiffer>
    <experiments>3</experiments>
</comment>
<comment type="interaction">
    <interactant intactId="EBI-2340927">
        <id>P78317</id>
    </interactant>
    <interactant intactId="EBI-744942">
        <id>Q12846</id>
        <label>STX4</label>
    </interactant>
    <organismsDiffer>false</organismsDiffer>
    <experiments>3</experiments>
</comment>
<comment type="interaction">
    <interactant intactId="EBI-2340927">
        <id>P78317</id>
    </interactant>
    <interactant intactId="EBI-80140">
        <id>P63165</id>
        <label>SUMO1</label>
    </interactant>
    <organismsDiffer>false</organismsDiffer>
    <experiments>3</experiments>
</comment>
<comment type="interaction">
    <interactant intactId="EBI-2340927">
        <id>P78317</id>
    </interactant>
    <interactant intactId="EBI-357061">
        <id>Q92734</id>
        <label>TFG</label>
    </interactant>
    <organismsDiffer>false</organismsDiffer>
    <experiments>5</experiments>
</comment>
<comment type="interaction">
    <interactant intactId="EBI-2340927">
        <id>P78317</id>
    </interactant>
    <interactant intactId="EBI-741515">
        <id>Q9NVV9</id>
        <label>THAP1</label>
    </interactant>
    <organismsDiffer>false</organismsDiffer>
    <experiments>3</experiments>
</comment>
<comment type="interaction">
    <interactant intactId="EBI-2340927">
        <id>P78317</id>
    </interactant>
    <interactant intactId="EBI-355744">
        <id>Q12933</id>
        <label>TRAF2</label>
    </interactant>
    <organismsDiffer>false</organismsDiffer>
    <experiments>3</experiments>
</comment>
<comment type="interaction">
    <interactant intactId="EBI-2340927">
        <id>P78317</id>
    </interactant>
    <interactant intactId="EBI-357631">
        <id>Q13114</id>
        <label>TRAF3</label>
    </interactant>
    <organismsDiffer>false</organismsDiffer>
    <experiments>3</experiments>
</comment>
<comment type="interaction">
    <interactant intactId="EBI-2340927">
        <id>P78317</id>
    </interactant>
    <interactant intactId="EBI-3650647">
        <id>Q9BUZ4</id>
        <label>TRAF4</label>
    </interactant>
    <organismsDiffer>false</organismsDiffer>
    <experiments>5</experiments>
</comment>
<comment type="interaction">
    <interactant intactId="EBI-2340927">
        <id>P78317</id>
    </interactant>
    <interactant intactId="EBI-523498">
        <id>O00463</id>
        <label>TRAF5</label>
    </interactant>
    <organismsDiffer>false</organismsDiffer>
    <experiments>5</experiments>
</comment>
<comment type="interaction">
    <interactant intactId="EBI-2340927">
        <id>P78317</id>
    </interactant>
    <interactant intactId="EBI-2130415">
        <id>O00635</id>
        <label>TRIM38</label>
    </interactant>
    <organismsDiffer>false</organismsDiffer>
    <experiments>3</experiments>
</comment>
<comment type="interaction">
    <interactant intactId="EBI-2340927">
        <id>P78317</id>
    </interactant>
    <interactant intactId="EBI-2130429">
        <id>Q9BYV2</id>
        <label>TRIM54</label>
    </interactant>
    <organismsDiffer>false</organismsDiffer>
    <experiments>3</experiments>
</comment>
<comment type="interaction">
    <interactant intactId="EBI-2340927">
        <id>P78317</id>
    </interactant>
    <interactant intactId="EBI-358993">
        <id>Q15645</id>
        <label>TRIP13</label>
    </interactant>
    <organismsDiffer>false</organismsDiffer>
    <experiments>3</experiments>
</comment>
<comment type="interaction">
    <interactant intactId="EBI-2340927">
        <id>P78317</id>
    </interactant>
    <interactant intactId="EBI-2556151">
        <id>Q9UHF7</id>
        <label>TRPS1</label>
    </interactant>
    <organismsDiffer>false</organismsDiffer>
    <experiments>2</experiments>
</comment>
<comment type="interaction">
    <interactant intactId="EBI-2340927">
        <id>P78317</id>
    </interactant>
    <interactant intactId="EBI-10180829">
        <id>Q7KZS0</id>
        <label>UBE2I</label>
    </interactant>
    <organismsDiffer>false</organismsDiffer>
    <experiments>3</experiments>
</comment>
<comment type="interaction">
    <interactant intactId="EBI-2340927">
        <id>P78317</id>
    </interactant>
    <interactant intactId="EBI-741480">
        <id>Q9UMX0</id>
        <label>UBQLN1</label>
    </interactant>
    <organismsDiffer>false</organismsDiffer>
    <experiments>3</experiments>
</comment>
<comment type="interaction">
    <interactant intactId="EBI-2340927">
        <id>P78317</id>
    </interactant>
    <interactant intactId="EBI-947187">
        <id>Q9UHD9</id>
        <label>UBQLN2</label>
    </interactant>
    <organismsDiffer>false</organismsDiffer>
    <experiments>3</experiments>
</comment>
<comment type="interaction">
    <interactant intactId="EBI-2340927">
        <id>P78317</id>
    </interactant>
    <interactant intactId="EBI-12867288">
        <id>Q8WUN7</id>
        <label>UBTD2</label>
    </interactant>
    <organismsDiffer>false</organismsDiffer>
    <experiments>3</experiments>
</comment>
<comment type="interaction">
    <interactant intactId="EBI-2340927">
        <id>P78317</id>
    </interactant>
    <interactant intactId="EBI-10191303">
        <id>O95231</id>
        <label>VENTX</label>
    </interactant>
    <organismsDiffer>false</organismsDiffer>
    <experiments>3</experiments>
</comment>
<comment type="interaction">
    <interactant intactId="EBI-2340927">
        <id>P78317</id>
    </interactant>
    <interactant intactId="EBI-3918996">
        <id>Q9HCK0</id>
        <label>ZBTB26</label>
    </interactant>
    <organismsDiffer>false</organismsDiffer>
    <experiments>3</experiments>
</comment>
<comment type="interaction">
    <interactant intactId="EBI-2340927">
        <id>P78317</id>
    </interactant>
    <interactant intactId="EBI-11317716">
        <id>Q8NCN2</id>
        <label>ZBTB34</label>
    </interactant>
    <organismsDiffer>false</organismsDiffer>
    <experiments>3</experiments>
</comment>
<comment type="interaction">
    <interactant intactId="EBI-2340927">
        <id>P78317</id>
    </interactant>
    <interactant intactId="EBI-7227791">
        <id>Q15916</id>
        <label>ZBTB6</label>
    </interactant>
    <organismsDiffer>false</organismsDiffer>
    <experiments>3</experiments>
</comment>
<comment type="interaction">
    <interactant intactId="EBI-2340927">
        <id>P78317</id>
    </interactant>
    <interactant intactId="EBI-742550">
        <id>Q96K80</id>
        <label>ZC3H10</label>
    </interactant>
    <organismsDiffer>false</organismsDiffer>
    <experiments>3</experiments>
</comment>
<comment type="interaction">
    <interactant intactId="EBI-2340927">
        <id>P78317</id>
    </interactant>
    <interactant intactId="EBI-746345">
        <id>Q9NP64</id>
        <label>ZCCHC17</label>
    </interactant>
    <organismsDiffer>false</organismsDiffer>
    <experiments>3</experiments>
</comment>
<comment type="interaction">
    <interactant intactId="EBI-2340927">
        <id>P78317</id>
    </interactant>
    <interactant intactId="EBI-12151755">
        <id>Q96MM3</id>
        <label>ZFP42</label>
    </interactant>
    <organismsDiffer>false</organismsDiffer>
    <experiments>3</experiments>
</comment>
<comment type="interaction">
    <interactant intactId="EBI-2340927">
        <id>P78317</id>
    </interactant>
    <interactant intactId="EBI-17263125">
        <id>Q9NSD4</id>
        <label>ZNF275</label>
    </interactant>
    <organismsDiffer>false</organismsDiffer>
    <experiments>3</experiments>
</comment>
<comment type="interaction">
    <interactant intactId="EBI-2340927">
        <id>P78317</id>
    </interactant>
    <interactant intactId="EBI-11993110">
        <id>Q9P2F9</id>
        <label>ZNF319</label>
    </interactant>
    <organismsDiffer>false</organismsDiffer>
    <experiments>5</experiments>
</comment>
<comment type="interaction">
    <interactant intactId="EBI-2340927">
        <id>P78317</id>
    </interactant>
    <interactant intactId="EBI-11090299">
        <id>Q9H7X3</id>
        <label>ZNF696</label>
    </interactant>
    <organismsDiffer>false</organismsDiffer>
    <experiments>5</experiments>
</comment>
<comment type="interaction">
    <interactant intactId="EBI-2340927">
        <id>P78317</id>
    </interactant>
    <interactant intactId="EBI-10240849">
        <id>Q3KQV3</id>
        <label>ZNF792</label>
    </interactant>
    <organismsDiffer>false</organismsDiffer>
    <experiments>3</experiments>
</comment>
<comment type="interaction">
    <interactant intactId="EBI-2340927">
        <id>P78317</id>
    </interactant>
    <interactant intactId="EBI-741415">
        <id>O60232</id>
        <label>ZNRD2</label>
    </interactant>
    <organismsDiffer>false</organismsDiffer>
    <experiments>3</experiments>
</comment>
<comment type="subcellular location">
    <subcellularLocation>
        <location evidence="6">Cytoplasm</location>
    </subcellularLocation>
    <subcellularLocation>
        <location evidence="6">Nucleus</location>
    </subcellularLocation>
    <subcellularLocation>
        <location evidence="7 13">Nucleus</location>
        <location evidence="7 13">PML body</location>
    </subcellularLocation>
</comment>
<comment type="alternative products">
    <event type="alternative splicing"/>
    <isoform>
        <id>P78317-1</id>
        <name>1</name>
        <sequence type="displayed"/>
    </isoform>
    <isoform>
        <id>P78317-2</id>
        <name>2</name>
        <sequence type="described" ref="VSP_045789 VSP_045790"/>
    </isoform>
</comment>
<comment type="tissue specificity">
    <text evidence="17">Widely expressed at low levels in many tissues; highly expressed in testis.</text>
</comment>
<comment type="domain">
    <text evidence="8">The SUMO interaction motifs (SIMs) mediates the binding to polysumoylated substrate.</text>
</comment>
<comment type="domain">
    <text evidence="1">The RING-type zinc finger domain is required for the ubiquitination of polysumoylated substrates.</text>
</comment>
<comment type="PTM">
    <text evidence="1">Sumoylated; conjugated by one or two SUMO1 moieties.</text>
</comment>
<comment type="PTM">
    <text evidence="1">Autoubiquitinated.</text>
</comment>
<evidence type="ECO:0000250" key="1">
    <source>
        <dbReference type="UniProtKB" id="O88846"/>
    </source>
</evidence>
<evidence type="ECO:0000250" key="2">
    <source>
        <dbReference type="UniProtKB" id="Q9QZS2"/>
    </source>
</evidence>
<evidence type="ECO:0000255" key="3">
    <source>
        <dbReference type="PROSITE-ProRule" id="PRU00175"/>
    </source>
</evidence>
<evidence type="ECO:0000256" key="4">
    <source>
        <dbReference type="SAM" id="MobiDB-lite"/>
    </source>
</evidence>
<evidence type="ECO:0000269" key="5">
    <source>
    </source>
</evidence>
<evidence type="ECO:0000269" key="6">
    <source>
    </source>
</evidence>
<evidence type="ECO:0000269" key="7">
    <source>
    </source>
</evidence>
<evidence type="ECO:0000269" key="8">
    <source>
    </source>
</evidence>
<evidence type="ECO:0000269" key="9">
    <source>
    </source>
</evidence>
<evidence type="ECO:0000269" key="10">
    <source>
    </source>
</evidence>
<evidence type="ECO:0000269" key="11">
    <source>
    </source>
</evidence>
<evidence type="ECO:0000269" key="12">
    <source>
    </source>
</evidence>
<evidence type="ECO:0000269" key="13">
    <source>
    </source>
</evidence>
<evidence type="ECO:0000269" key="14">
    <source>
    </source>
</evidence>
<evidence type="ECO:0000269" key="15">
    <source>
    </source>
</evidence>
<evidence type="ECO:0000269" key="16">
    <source>
    </source>
</evidence>
<evidence type="ECO:0000269" key="17">
    <source>
    </source>
</evidence>
<evidence type="ECO:0000303" key="18">
    <source>
    </source>
</evidence>
<evidence type="ECO:0000303" key="19">
    <source>
    </source>
</evidence>
<evidence type="ECO:0000303" key="20">
    <source>
    </source>
</evidence>
<evidence type="ECO:0000305" key="21"/>
<evidence type="ECO:0000312" key="22">
    <source>
        <dbReference type="HGNC" id="HGNC:10067"/>
    </source>
</evidence>
<evidence type="ECO:0007744" key="23">
    <source>
    </source>
</evidence>
<evidence type="ECO:0007744" key="24">
    <source>
    </source>
</evidence>
<evidence type="ECO:0007829" key="25">
    <source>
        <dbReference type="PDB" id="2EA6"/>
    </source>
</evidence>
<evidence type="ECO:0007829" key="26">
    <source>
        <dbReference type="PDB" id="2XEU"/>
    </source>
</evidence>
<sequence>MSTRKRRGGAINSRQAQKRTREATSTPEISLEAEPIELVETAGDEIVDLTCESLEPVVVDLTHNDSVVIVDERRRPRRNARRLPQDHADSCVVSSDDEELSRDRDVYVTTHTPRNARDEGATGLRPSGTVSCPICMDGYSEIVQNGRLIVSTECGHVFCSQCLRDSLKNANTCPTCRKKINHKRYHPIYI</sequence>
<keyword id="KW-0002">3D-structure</keyword>
<keyword id="KW-0010">Activator</keyword>
<keyword id="KW-0025">Alternative splicing</keyword>
<keyword id="KW-0963">Cytoplasm</keyword>
<keyword id="KW-0238">DNA-binding</keyword>
<keyword id="KW-0479">Metal-binding</keyword>
<keyword id="KW-0539">Nucleus</keyword>
<keyword id="KW-0597">Phosphoprotein</keyword>
<keyword id="KW-1267">Proteomics identification</keyword>
<keyword id="KW-1185">Reference proteome</keyword>
<keyword id="KW-0804">Transcription</keyword>
<keyword id="KW-0805">Transcription regulation</keyword>
<keyword id="KW-0808">Transferase</keyword>
<keyword id="KW-0832">Ubl conjugation</keyword>
<keyword id="KW-0833">Ubl conjugation pathway</keyword>
<keyword id="KW-0862">Zinc</keyword>
<keyword id="KW-0863">Zinc-finger</keyword>